<reference key="1">
    <citation type="journal article" date="1994" name="J. Biol. Chem.">
        <title>cDNA cloning and chromosome mapping of human dihydropyrimidine dehydrogenase, an enzyme associated with 5-fluorouracil toxicity and congenital thymine uraciluria.</title>
        <authorList>
            <person name="Yokota H."/>
            <person name="Fernandez-Salguero P."/>
            <person name="Furuya H."/>
            <person name="Lin K."/>
            <person name="McBride O.W."/>
            <person name="Podschun B."/>
            <person name="Schnackerz K.D."/>
            <person name="Gonzalez F.J."/>
        </authorList>
    </citation>
    <scope>NUCLEOTIDE SEQUENCE [MRNA]</scope>
    <scope>PARTIAL PROTEIN SEQUENCE</scope>
    <scope>CATALYTIC ACTIVITY</scope>
    <source>
        <tissue>Liver</tissue>
    </source>
</reference>
<reference key="2">
    <citation type="journal article" date="1998" name="Biochemistry">
        <title>Porcine recombinant dihydropyrimidine dehydrogenase: comparison of the spectroscopic and catalytic properties of the wild-type and C671A mutant enzymes.</title>
        <authorList>
            <person name="Rosenbaum K."/>
            <person name="Jahnke K."/>
            <person name="Curti B."/>
            <person name="Hagen W.R."/>
            <person name="Schnackerz K.D."/>
            <person name="Vanoni M.A."/>
        </authorList>
    </citation>
    <scope>FUNCTION</scope>
    <scope>CATALYTIC ACTIVITY</scope>
    <scope>SUBUNIT</scope>
    <scope>COFACTOR</scope>
    <scope>MUTAGENESIS OF CYS-671</scope>
</reference>
<reference key="3">
    <citation type="journal article" date="2010" name="Biochim. Biophys. Acta">
        <title>Insights into the mechanism of dihydropyrimidine dehydrogenase from site-directed mutagenesis targeting the active site loop and redox cofactor coordination.</title>
        <authorList>
            <person name="Lohkamp B."/>
            <person name="Voevodskaya N."/>
            <person name="Lindqvist Y."/>
            <person name="Dobritzsch D."/>
        </authorList>
    </citation>
    <scope>FUNCTION</scope>
    <scope>CATALYTIC ACTIVITY</scope>
    <scope>COFACTOR</scope>
    <scope>MUTAGENESIS OF CYS-126; GLN-156; ARG-235 AND SER-670</scope>
</reference>
<reference key="4">
    <citation type="journal article" date="2001" name="EMBO J.">
        <title>Crystal structure of dihydropyrimidine dehydrogenase, a major determinant of the pharmacokinetics of the anti-cancer drug 5-fluorouracil.</title>
        <authorList>
            <person name="Dobritzsch D."/>
            <person name="Schneider G."/>
            <person name="Schnackerz K.D."/>
            <person name="Lindqvist Y."/>
        </authorList>
    </citation>
    <scope>X-RAY CRYSTALLOGRAPHY (1.90 ANGSTROMS) IN COMPLEXES WITH 5-FLUOROURACIL; FAD; FMN; 4FE-4S IRON-SULFUR CLUSTER AND NADP</scope>
    <scope>FUNCTION</scope>
    <scope>SUBUNIT</scope>
    <scope>COFACTOR</scope>
</reference>
<reference key="5">
    <citation type="journal article" date="2002" name="J. Biol. Chem.">
        <title>Crystal structure of the productive ternary complex of dihydropyrimidine dehydrogenase with NADPH and 5-iodouracil. Implications for mechanism of inhibition and electron transfer.</title>
        <authorList>
            <person name="Dobritzsch D."/>
            <person name="Ricagno S."/>
            <person name="Schneider G."/>
            <person name="Schnackerz K.D."/>
            <person name="Lindqvist Y."/>
        </authorList>
    </citation>
    <scope>X-RAY CRYSTALLOGRAPHY (1.65 ANGSTROMS) IN COMPLEX WITH 5-IODOURACIL; FAD; FMN; 4FE-4S IRON-SULFUR CLUSTER AND NADP</scope>
    <scope>COFACTOR</scope>
    <scope>ACTIVE SITE</scope>
</reference>
<name>DPYD_PIG</name>
<proteinExistence type="evidence at protein level"/>
<keyword id="KW-0002">3D-structure</keyword>
<keyword id="KW-0004">4Fe-4S</keyword>
<keyword id="KW-0007">Acetylation</keyword>
<keyword id="KW-0963">Cytoplasm</keyword>
<keyword id="KW-0903">Direct protein sequencing</keyword>
<keyword id="KW-0274">FAD</keyword>
<keyword id="KW-0285">Flavoprotein</keyword>
<keyword id="KW-0288">FMN</keyword>
<keyword id="KW-0408">Iron</keyword>
<keyword id="KW-0411">Iron-sulfur</keyword>
<keyword id="KW-0479">Metal-binding</keyword>
<keyword id="KW-0521">NADP</keyword>
<keyword id="KW-0547">Nucleotide-binding</keyword>
<keyword id="KW-0560">Oxidoreductase</keyword>
<keyword id="KW-1185">Reference proteome</keyword>
<keyword id="KW-0677">Repeat</keyword>
<accession>Q28943</accession>
<dbReference type="EC" id="1.3.1.2" evidence="5 6 7"/>
<dbReference type="EMBL" id="U09179">
    <property type="protein sequence ID" value="AAA57475.1"/>
    <property type="molecule type" value="mRNA"/>
</dbReference>
<dbReference type="PIR" id="B54718">
    <property type="entry name" value="B54718"/>
</dbReference>
<dbReference type="RefSeq" id="NP_999209.1">
    <property type="nucleotide sequence ID" value="NM_214044.2"/>
</dbReference>
<dbReference type="PDB" id="1GT8">
    <property type="method" value="X-ray"/>
    <property type="resolution" value="3.30 A"/>
    <property type="chains" value="A/B/C/D=1-1025"/>
</dbReference>
<dbReference type="PDB" id="1GTE">
    <property type="method" value="X-ray"/>
    <property type="resolution" value="1.65 A"/>
    <property type="chains" value="A/B/C/D=1-1025"/>
</dbReference>
<dbReference type="PDB" id="1GTH">
    <property type="method" value="X-ray"/>
    <property type="resolution" value="2.25 A"/>
    <property type="chains" value="A/B/C/D=1-1025"/>
</dbReference>
<dbReference type="PDB" id="1H7W">
    <property type="method" value="X-ray"/>
    <property type="resolution" value="1.90 A"/>
    <property type="chains" value="A/B/C/D=1-1025"/>
</dbReference>
<dbReference type="PDB" id="1H7X">
    <property type="method" value="X-ray"/>
    <property type="resolution" value="2.01 A"/>
    <property type="chains" value="A/B/C/D=1-1025"/>
</dbReference>
<dbReference type="PDB" id="7LJS">
    <property type="method" value="X-ray"/>
    <property type="resolution" value="2.00 A"/>
    <property type="chains" value="A/B/C/D=1-1025"/>
</dbReference>
<dbReference type="PDB" id="7LJT">
    <property type="method" value="X-ray"/>
    <property type="resolution" value="1.98 A"/>
    <property type="chains" value="A/B/C/D=1-1025"/>
</dbReference>
<dbReference type="PDB" id="7LJU">
    <property type="method" value="X-ray"/>
    <property type="resolution" value="1.87 A"/>
    <property type="chains" value="A/B/C/D=1-1025"/>
</dbReference>
<dbReference type="PDB" id="7M31">
    <property type="method" value="X-ray"/>
    <property type="resolution" value="1.69 A"/>
    <property type="chains" value="A/B/C/D=1-1025"/>
</dbReference>
<dbReference type="PDB" id="7M32">
    <property type="method" value="X-ray"/>
    <property type="resolution" value="1.82 A"/>
    <property type="chains" value="A/B/C/D=1-1025"/>
</dbReference>
<dbReference type="PDB" id="8F5W">
    <property type="method" value="X-ray"/>
    <property type="resolution" value="1.97 A"/>
    <property type="chains" value="A/B/C/D=1-1025"/>
</dbReference>
<dbReference type="PDB" id="8F61">
    <property type="method" value="X-ray"/>
    <property type="resolution" value="2.14 A"/>
    <property type="chains" value="A/B/C/D=1-1025"/>
</dbReference>
<dbReference type="PDB" id="8F6N">
    <property type="method" value="X-ray"/>
    <property type="resolution" value="2.12 A"/>
    <property type="chains" value="A/B/C/D=1-1018"/>
</dbReference>
<dbReference type="PDBsum" id="1GT8"/>
<dbReference type="PDBsum" id="1GTE"/>
<dbReference type="PDBsum" id="1GTH"/>
<dbReference type="PDBsum" id="1H7W"/>
<dbReference type="PDBsum" id="1H7X"/>
<dbReference type="PDBsum" id="7LJS"/>
<dbReference type="PDBsum" id="7LJT"/>
<dbReference type="PDBsum" id="7LJU"/>
<dbReference type="PDBsum" id="7M31"/>
<dbReference type="PDBsum" id="7M32"/>
<dbReference type="PDBsum" id="8F5W"/>
<dbReference type="PDBsum" id="8F61"/>
<dbReference type="PDBsum" id="8F6N"/>
<dbReference type="SMR" id="Q28943"/>
<dbReference type="FunCoup" id="Q28943">
    <property type="interactions" value="162"/>
</dbReference>
<dbReference type="STRING" id="9823.ENSSSCP00000007333"/>
<dbReference type="PaxDb" id="9823-ENSSSCP00000007333"/>
<dbReference type="PeptideAtlas" id="Q28943"/>
<dbReference type="GeneID" id="397109"/>
<dbReference type="KEGG" id="ssc:397109"/>
<dbReference type="CTD" id="1806"/>
<dbReference type="eggNOG" id="KOG1799">
    <property type="taxonomic scope" value="Eukaryota"/>
</dbReference>
<dbReference type="InParanoid" id="Q28943"/>
<dbReference type="OrthoDB" id="4327079at2759"/>
<dbReference type="BRENDA" id="1.3.1.2">
    <property type="organism ID" value="6170"/>
</dbReference>
<dbReference type="UniPathway" id="UPA00131"/>
<dbReference type="EvolutionaryTrace" id="Q28943"/>
<dbReference type="Proteomes" id="UP000008227">
    <property type="component" value="Unplaced"/>
</dbReference>
<dbReference type="Proteomes" id="UP000314985">
    <property type="component" value="Unplaced"/>
</dbReference>
<dbReference type="Proteomes" id="UP000694570">
    <property type="component" value="Unplaced"/>
</dbReference>
<dbReference type="Proteomes" id="UP000694571">
    <property type="component" value="Unplaced"/>
</dbReference>
<dbReference type="Proteomes" id="UP000694720">
    <property type="component" value="Unplaced"/>
</dbReference>
<dbReference type="Proteomes" id="UP000694722">
    <property type="component" value="Unplaced"/>
</dbReference>
<dbReference type="Proteomes" id="UP000694723">
    <property type="component" value="Unplaced"/>
</dbReference>
<dbReference type="Proteomes" id="UP000694724">
    <property type="component" value="Unplaced"/>
</dbReference>
<dbReference type="Proteomes" id="UP000694725">
    <property type="component" value="Unplaced"/>
</dbReference>
<dbReference type="Proteomes" id="UP000694726">
    <property type="component" value="Unplaced"/>
</dbReference>
<dbReference type="Proteomes" id="UP000694727">
    <property type="component" value="Unplaced"/>
</dbReference>
<dbReference type="Proteomes" id="UP000694728">
    <property type="component" value="Unplaced"/>
</dbReference>
<dbReference type="GO" id="GO:0005737">
    <property type="term" value="C:cytoplasm"/>
    <property type="evidence" value="ECO:0000250"/>
    <property type="project" value="UniProtKB"/>
</dbReference>
<dbReference type="GO" id="GO:0005829">
    <property type="term" value="C:cytosol"/>
    <property type="evidence" value="ECO:0000318"/>
    <property type="project" value="GO_Central"/>
</dbReference>
<dbReference type="GO" id="GO:0051539">
    <property type="term" value="F:4 iron, 4 sulfur cluster binding"/>
    <property type="evidence" value="ECO:0007669"/>
    <property type="project" value="UniProtKB-KW"/>
</dbReference>
<dbReference type="GO" id="GO:0017113">
    <property type="term" value="F:dihydropyrimidine dehydrogenase (NADP+) activity"/>
    <property type="evidence" value="ECO:0000314"/>
    <property type="project" value="UniProtKB"/>
</dbReference>
<dbReference type="GO" id="GO:0050660">
    <property type="term" value="F:flavin adenine dinucleotide binding"/>
    <property type="evidence" value="ECO:0000314"/>
    <property type="project" value="UniProtKB"/>
</dbReference>
<dbReference type="GO" id="GO:0010181">
    <property type="term" value="F:FMN binding"/>
    <property type="evidence" value="ECO:0000314"/>
    <property type="project" value="UniProtKB"/>
</dbReference>
<dbReference type="GO" id="GO:0046872">
    <property type="term" value="F:metal ion binding"/>
    <property type="evidence" value="ECO:0007669"/>
    <property type="project" value="UniProtKB-KW"/>
</dbReference>
<dbReference type="GO" id="GO:0050661">
    <property type="term" value="F:NADP binding"/>
    <property type="evidence" value="ECO:0000314"/>
    <property type="project" value="UniProtKB"/>
</dbReference>
<dbReference type="GO" id="GO:0042803">
    <property type="term" value="F:protein homodimerization activity"/>
    <property type="evidence" value="ECO:0000314"/>
    <property type="project" value="UniProtKB"/>
</dbReference>
<dbReference type="GO" id="GO:0002058">
    <property type="term" value="F:uracil binding"/>
    <property type="evidence" value="ECO:0000318"/>
    <property type="project" value="GO_Central"/>
</dbReference>
<dbReference type="GO" id="GO:0019483">
    <property type="term" value="P:beta-alanine biosynthetic process"/>
    <property type="evidence" value="ECO:0007669"/>
    <property type="project" value="UniProtKB-UniPathway"/>
</dbReference>
<dbReference type="GO" id="GO:0006214">
    <property type="term" value="P:thymidine catabolic process"/>
    <property type="evidence" value="ECO:0000250"/>
    <property type="project" value="UniProtKB"/>
</dbReference>
<dbReference type="GO" id="GO:0006210">
    <property type="term" value="P:thymine catabolic process"/>
    <property type="evidence" value="ECO:0000318"/>
    <property type="project" value="GO_Central"/>
</dbReference>
<dbReference type="GO" id="GO:0006212">
    <property type="term" value="P:uracil catabolic process"/>
    <property type="evidence" value="ECO:0000250"/>
    <property type="project" value="UniProtKB"/>
</dbReference>
<dbReference type="CDD" id="cd02940">
    <property type="entry name" value="DHPD_FMN"/>
    <property type="match status" value="1"/>
</dbReference>
<dbReference type="FunFam" id="1.10.1060.10:FF:000007">
    <property type="entry name" value="Dihydropyrimidine dehydrogenase [NADP(+)]"/>
    <property type="match status" value="1"/>
</dbReference>
<dbReference type="FunFam" id="3.20.20.70:FF:000027">
    <property type="entry name" value="Dihydropyrimidine dehydrogenase [NADP(+)]"/>
    <property type="match status" value="1"/>
</dbReference>
<dbReference type="FunFam" id="3.30.70.20:FF:000023">
    <property type="entry name" value="Dihydropyrimidine dehydrogenase [NADP(+)]"/>
    <property type="match status" value="1"/>
</dbReference>
<dbReference type="FunFam" id="3.50.50.60:FF:000056">
    <property type="entry name" value="Dihydropyrimidine dehydrogenase [NADP(+)]"/>
    <property type="match status" value="1"/>
</dbReference>
<dbReference type="FunFam" id="3.50.50.60:FF:000061">
    <property type="entry name" value="Dihydropyrimidine dehydrogenase [NADP(+)]"/>
    <property type="match status" value="1"/>
</dbReference>
<dbReference type="Gene3D" id="3.30.70.20">
    <property type="match status" value="1"/>
</dbReference>
<dbReference type="Gene3D" id="3.20.20.70">
    <property type="entry name" value="Aldolase class I"/>
    <property type="match status" value="1"/>
</dbReference>
<dbReference type="Gene3D" id="1.10.1060.10">
    <property type="entry name" value="Alpha-helical ferredoxin"/>
    <property type="match status" value="1"/>
</dbReference>
<dbReference type="Gene3D" id="3.50.50.60">
    <property type="entry name" value="FAD/NAD(P)-binding domain"/>
    <property type="match status" value="2"/>
</dbReference>
<dbReference type="InterPro" id="IPR017896">
    <property type="entry name" value="4Fe4S_Fe-S-bd"/>
</dbReference>
<dbReference type="InterPro" id="IPR017900">
    <property type="entry name" value="4Fe4S_Fe_S_CS"/>
</dbReference>
<dbReference type="InterPro" id="IPR013785">
    <property type="entry name" value="Aldolase_TIM"/>
</dbReference>
<dbReference type="InterPro" id="IPR005720">
    <property type="entry name" value="Dihydroorotate_DH_cat"/>
</dbReference>
<dbReference type="InterPro" id="IPR028261">
    <property type="entry name" value="DPD_II"/>
</dbReference>
<dbReference type="InterPro" id="IPR036188">
    <property type="entry name" value="FAD/NAD-bd_sf"/>
</dbReference>
<dbReference type="InterPro" id="IPR023753">
    <property type="entry name" value="FAD/NAD-binding_dom"/>
</dbReference>
<dbReference type="InterPro" id="IPR009051">
    <property type="entry name" value="Helical_ferredxn"/>
</dbReference>
<dbReference type="PANTHER" id="PTHR43073">
    <property type="entry name" value="DIHYDROPYRIMIDINE DEHYDROGENASE [NADP(+)]"/>
    <property type="match status" value="1"/>
</dbReference>
<dbReference type="PANTHER" id="PTHR43073:SF2">
    <property type="entry name" value="DIHYDROPYRIMIDINE DEHYDROGENASE [NADP(+)]"/>
    <property type="match status" value="1"/>
</dbReference>
<dbReference type="Pfam" id="PF01180">
    <property type="entry name" value="DHO_dh"/>
    <property type="match status" value="1"/>
</dbReference>
<dbReference type="Pfam" id="PF14691">
    <property type="entry name" value="Fer4_20"/>
    <property type="match status" value="1"/>
</dbReference>
<dbReference type="Pfam" id="PF14697">
    <property type="entry name" value="Fer4_21"/>
    <property type="match status" value="1"/>
</dbReference>
<dbReference type="Pfam" id="PF07992">
    <property type="entry name" value="Pyr_redox_2"/>
    <property type="match status" value="1"/>
</dbReference>
<dbReference type="PRINTS" id="PR00419">
    <property type="entry name" value="ADXRDTASE"/>
</dbReference>
<dbReference type="SUPFAM" id="SSF54862">
    <property type="entry name" value="4Fe-4S ferredoxins"/>
    <property type="match status" value="1"/>
</dbReference>
<dbReference type="SUPFAM" id="SSF46548">
    <property type="entry name" value="alpha-helical ferredoxin"/>
    <property type="match status" value="1"/>
</dbReference>
<dbReference type="SUPFAM" id="SSF51395">
    <property type="entry name" value="FMN-linked oxidoreductases"/>
    <property type="match status" value="1"/>
</dbReference>
<dbReference type="SUPFAM" id="SSF51971">
    <property type="entry name" value="Nucleotide-binding domain"/>
    <property type="match status" value="2"/>
</dbReference>
<dbReference type="PROSITE" id="PS00198">
    <property type="entry name" value="4FE4S_FER_1"/>
    <property type="match status" value="1"/>
</dbReference>
<dbReference type="PROSITE" id="PS51379">
    <property type="entry name" value="4FE4S_FER_2"/>
    <property type="match status" value="3"/>
</dbReference>
<evidence type="ECO:0000250" key="1">
    <source>
        <dbReference type="UniProtKB" id="Q12882"/>
    </source>
</evidence>
<evidence type="ECO:0000255" key="2">
    <source>
        <dbReference type="PROSITE-ProRule" id="PRU00711"/>
    </source>
</evidence>
<evidence type="ECO:0000269" key="3">
    <source>
    </source>
</evidence>
<evidence type="ECO:0000269" key="4">
    <source>
    </source>
</evidence>
<evidence type="ECO:0000269" key="5">
    <source>
    </source>
</evidence>
<evidence type="ECO:0000269" key="6">
    <source>
    </source>
</evidence>
<evidence type="ECO:0000269" key="7">
    <source>
    </source>
</evidence>
<evidence type="ECO:0000305" key="8"/>
<evidence type="ECO:0000305" key="9">
    <source>
    </source>
</evidence>
<evidence type="ECO:0007829" key="10">
    <source>
        <dbReference type="PDB" id="1GT8"/>
    </source>
</evidence>
<evidence type="ECO:0007829" key="11">
    <source>
        <dbReference type="PDB" id="1GTE"/>
    </source>
</evidence>
<evidence type="ECO:0007829" key="12">
    <source>
        <dbReference type="PDB" id="1H7X"/>
    </source>
</evidence>
<evidence type="ECO:0007829" key="13">
    <source>
        <dbReference type="PDB" id="7LJT"/>
    </source>
</evidence>
<evidence type="ECO:0007829" key="14">
    <source>
        <dbReference type="PDB" id="7M31"/>
    </source>
</evidence>
<evidence type="ECO:0007829" key="15">
    <source>
        <dbReference type="PDB" id="8F5W"/>
    </source>
</evidence>
<evidence type="ECO:0007829" key="16">
    <source>
        <dbReference type="PDB" id="8F6N"/>
    </source>
</evidence>
<feature type="propeptide" id="PRO_0000021116">
    <location>
        <begin position="1"/>
        <end position="3"/>
    </location>
</feature>
<feature type="chain" id="PRO_0000021117" description="Dihydropyrimidine dehydrogenase [NADP(+)]">
    <location>
        <begin position="4"/>
        <end position="1025"/>
    </location>
</feature>
<feature type="domain" description="4Fe-4S ferredoxin-type 1" evidence="2">
    <location>
        <begin position="69"/>
        <end position="100"/>
    </location>
</feature>
<feature type="domain" description="4Fe-4S ferredoxin-type 2" evidence="2">
    <location>
        <begin position="944"/>
        <end position="976"/>
    </location>
</feature>
<feature type="domain" description="4Fe-4S ferredoxin-type 3" evidence="2">
    <location>
        <begin position="978"/>
        <end position="1007"/>
    </location>
</feature>
<feature type="active site" description="Proton acceptor" evidence="4">
    <location>
        <position position="671"/>
    </location>
</feature>
<feature type="binding site">
    <location>
        <position position="79"/>
    </location>
    <ligand>
        <name>[4Fe-4S] cluster</name>
        <dbReference type="ChEBI" id="CHEBI:49883"/>
        <label>1</label>
    </ligand>
</feature>
<feature type="binding site">
    <location>
        <position position="82"/>
    </location>
    <ligand>
        <name>[4Fe-4S] cluster</name>
        <dbReference type="ChEBI" id="CHEBI:49883"/>
        <label>1</label>
    </ligand>
</feature>
<feature type="binding site">
    <location>
        <position position="87"/>
    </location>
    <ligand>
        <name>[4Fe-4S] cluster</name>
        <dbReference type="ChEBI" id="CHEBI:49883"/>
        <label>1</label>
    </ligand>
</feature>
<feature type="binding site">
    <location>
        <position position="91"/>
    </location>
    <ligand>
        <name>[4Fe-4S] cluster</name>
        <dbReference type="ChEBI" id="CHEBI:49883"/>
        <label>2</label>
    </ligand>
</feature>
<feature type="binding site" evidence="4">
    <location>
        <position position="129"/>
    </location>
    <ligand>
        <name>FAD</name>
        <dbReference type="ChEBI" id="CHEBI:57692"/>
    </ligand>
</feature>
<feature type="binding site">
    <location>
        <position position="130"/>
    </location>
    <ligand>
        <name>[4Fe-4S] cluster</name>
        <dbReference type="ChEBI" id="CHEBI:49883"/>
        <label>2</label>
    </ligand>
</feature>
<feature type="binding site">
    <location>
        <position position="136"/>
    </location>
    <ligand>
        <name>[4Fe-4S] cluster</name>
        <dbReference type="ChEBI" id="CHEBI:49883"/>
        <label>2</label>
    </ligand>
</feature>
<feature type="binding site">
    <location>
        <position position="140"/>
    </location>
    <ligand>
        <name>[4Fe-4S] cluster</name>
        <dbReference type="ChEBI" id="CHEBI:49883"/>
        <label>1</label>
    </ligand>
</feature>
<feature type="binding site">
    <location>
        <position position="156"/>
    </location>
    <ligand>
        <name>[4Fe-4S] cluster</name>
        <dbReference type="ChEBI" id="CHEBI:49883"/>
        <label>2</label>
    </ligand>
</feature>
<feature type="binding site" evidence="4">
    <location>
        <begin position="194"/>
        <end position="198"/>
    </location>
    <ligand>
        <name>FAD</name>
        <dbReference type="ChEBI" id="CHEBI:57692"/>
    </ligand>
</feature>
<feature type="binding site" evidence="4">
    <location>
        <begin position="218"/>
        <end position="226"/>
    </location>
    <ligand>
        <name>FAD</name>
        <dbReference type="ChEBI" id="CHEBI:57692"/>
    </ligand>
</feature>
<feature type="binding site" evidence="4">
    <location>
        <position position="235"/>
    </location>
    <ligand>
        <name>FAD</name>
        <dbReference type="ChEBI" id="CHEBI:57692"/>
    </ligand>
</feature>
<feature type="binding site" evidence="4">
    <location>
        <position position="261"/>
    </location>
    <ligand>
        <name>FAD</name>
        <dbReference type="ChEBI" id="CHEBI:57692"/>
    </ligand>
</feature>
<feature type="binding site" evidence="4">
    <location>
        <begin position="340"/>
        <end position="343"/>
    </location>
    <ligand>
        <name>NADP(+)</name>
        <dbReference type="ChEBI" id="CHEBI:58349"/>
    </ligand>
</feature>
<feature type="binding site" evidence="4">
    <location>
        <begin position="364"/>
        <end position="365"/>
    </location>
    <ligand>
        <name>NADP(+)</name>
        <dbReference type="ChEBI" id="CHEBI:58349"/>
    </ligand>
</feature>
<feature type="binding site" evidence="4">
    <location>
        <position position="371"/>
    </location>
    <ligand>
        <name>NADP(+)</name>
        <dbReference type="ChEBI" id="CHEBI:58349"/>
    </ligand>
</feature>
<feature type="binding site" evidence="4">
    <location>
        <begin position="437"/>
        <end position="439"/>
    </location>
    <ligand>
        <name>NADP(+)</name>
        <dbReference type="ChEBI" id="CHEBI:58349"/>
    </ligand>
</feature>
<feature type="binding site" evidence="4">
    <location>
        <begin position="480"/>
        <end position="489"/>
    </location>
    <ligand>
        <name>FAD</name>
        <dbReference type="ChEBI" id="CHEBI:57692"/>
    </ligand>
</feature>
<feature type="binding site" evidence="4">
    <location>
        <begin position="481"/>
        <end position="487"/>
    </location>
    <ligand>
        <name>NADP(+)</name>
        <dbReference type="ChEBI" id="CHEBI:58349"/>
    </ligand>
</feature>
<feature type="binding site" evidence="4">
    <location>
        <position position="550"/>
    </location>
    <ligand>
        <name>FMN</name>
        <dbReference type="ChEBI" id="CHEBI:58210"/>
    </ligand>
</feature>
<feature type="binding site" evidence="4">
    <location>
        <begin position="574"/>
        <end position="575"/>
    </location>
    <ligand>
        <name>FMN</name>
        <dbReference type="ChEBI" id="CHEBI:58210"/>
    </ligand>
</feature>
<feature type="binding site">
    <location>
        <position position="609"/>
    </location>
    <ligand>
        <name>substrate</name>
    </ligand>
</feature>
<feature type="binding site">
    <location>
        <begin position="668"/>
        <end position="670"/>
    </location>
    <ligand>
        <name>substrate</name>
    </ligand>
</feature>
<feature type="binding site" evidence="4">
    <location>
        <position position="709"/>
    </location>
    <ligand>
        <name>FMN</name>
        <dbReference type="ChEBI" id="CHEBI:58210"/>
    </ligand>
</feature>
<feature type="binding site">
    <location>
        <begin position="736"/>
        <end position="737"/>
    </location>
    <ligand>
        <name>substrate</name>
    </ligand>
</feature>
<feature type="binding site" evidence="4">
    <location>
        <position position="767"/>
    </location>
    <ligand>
        <name>FMN</name>
        <dbReference type="ChEBI" id="CHEBI:58210"/>
    </ligand>
</feature>
<feature type="binding site" evidence="4">
    <location>
        <begin position="793"/>
        <end position="795"/>
    </location>
    <ligand>
        <name>FMN</name>
        <dbReference type="ChEBI" id="CHEBI:58210"/>
    </ligand>
</feature>
<feature type="binding site" evidence="4">
    <location>
        <begin position="816"/>
        <end position="817"/>
    </location>
    <ligand>
        <name>FMN</name>
        <dbReference type="ChEBI" id="CHEBI:58210"/>
    </ligand>
</feature>
<feature type="binding site">
    <location>
        <position position="953"/>
    </location>
    <ligand>
        <name>[4Fe-4S] cluster</name>
        <dbReference type="ChEBI" id="CHEBI:49883"/>
        <label>3</label>
    </ligand>
</feature>
<feature type="binding site">
    <location>
        <position position="956"/>
    </location>
    <ligand>
        <name>[4Fe-4S] cluster</name>
        <dbReference type="ChEBI" id="CHEBI:49883"/>
        <label>3</label>
    </ligand>
</feature>
<feature type="binding site">
    <location>
        <position position="959"/>
    </location>
    <ligand>
        <name>[4Fe-4S] cluster</name>
        <dbReference type="ChEBI" id="CHEBI:49883"/>
        <label>3</label>
    </ligand>
</feature>
<feature type="binding site">
    <location>
        <position position="963"/>
    </location>
    <ligand>
        <name>[4Fe-4S] cluster</name>
        <dbReference type="ChEBI" id="CHEBI:49883"/>
        <label>3</label>
    </ligand>
</feature>
<feature type="binding site">
    <location>
        <position position="986"/>
    </location>
    <ligand>
        <name>[4Fe-4S] cluster</name>
        <dbReference type="ChEBI" id="CHEBI:49883"/>
        <label>4</label>
    </ligand>
</feature>
<feature type="binding site">
    <location>
        <position position="989"/>
    </location>
    <ligand>
        <name>[4Fe-4S] cluster</name>
        <dbReference type="ChEBI" id="CHEBI:49883"/>
        <label>4</label>
    </ligand>
</feature>
<feature type="binding site">
    <location>
        <position position="992"/>
    </location>
    <ligand>
        <name>[4Fe-4S] cluster</name>
        <dbReference type="ChEBI" id="CHEBI:49883"/>
        <label>4</label>
    </ligand>
</feature>
<feature type="binding site">
    <location>
        <position position="996"/>
    </location>
    <ligand>
        <name>[4Fe-4S] cluster</name>
        <dbReference type="ChEBI" id="CHEBI:49883"/>
        <label>4</label>
    </ligand>
</feature>
<feature type="modified residue" description="N6-acetyllysine" evidence="1">
    <location>
        <position position="384"/>
    </location>
</feature>
<feature type="mutagenesis site" description="No effect on enzyme activity. Reduced iron content." evidence="5">
    <original>C</original>
    <variation>A</variation>
    <location>
        <position position="126"/>
    </location>
</feature>
<feature type="mutagenesis site" description="Loss of enzyme activity. Reduces iron content." evidence="5">
    <original>Q</original>
    <variation>E</variation>
    <location>
        <position position="156"/>
    </location>
</feature>
<feature type="mutagenesis site" description="Loss of enzyme activity. Loss of FAD binding." evidence="5">
    <original>R</original>
    <variation>A</variation>
    <variation>K</variation>
    <location>
        <position position="235"/>
    </location>
</feature>
<feature type="mutagenesis site" description="Strongly reduced affinity for uracil. Reduces enzyme activity by 30%." evidence="5">
    <original>S</original>
    <variation>A</variation>
    <location>
        <position position="670"/>
    </location>
</feature>
<feature type="mutagenesis site" description="Reduces catalytic activity by 99%." evidence="7">
    <original>C</original>
    <variation>A</variation>
    <location>
        <position position="671"/>
    </location>
</feature>
<feature type="mutagenesis site" description="Reduces activity by 50%.">
    <original>H</original>
    <variation>Q</variation>
    <location>
        <position position="673"/>
    </location>
</feature>
<feature type="helix" evidence="11">
    <location>
        <begin position="10"/>
        <end position="15"/>
    </location>
</feature>
<feature type="turn" evidence="11">
    <location>
        <begin position="16"/>
        <end position="18"/>
    </location>
</feature>
<feature type="strand" evidence="11">
    <location>
        <begin position="24"/>
        <end position="26"/>
    </location>
</feature>
<feature type="helix" evidence="11">
    <location>
        <begin position="31"/>
        <end position="41"/>
    </location>
</feature>
<feature type="helix" evidence="11">
    <location>
        <begin position="69"/>
        <end position="78"/>
    </location>
</feature>
<feature type="helix" evidence="11">
    <location>
        <begin position="86"/>
        <end position="89"/>
    </location>
</feature>
<feature type="helix" evidence="11">
    <location>
        <begin position="97"/>
        <end position="105"/>
    </location>
</feature>
<feature type="helix" evidence="11">
    <location>
        <begin position="109"/>
        <end position="119"/>
    </location>
</feature>
<feature type="helix" evidence="11">
    <location>
        <begin position="123"/>
        <end position="129"/>
    </location>
</feature>
<feature type="helix" evidence="11">
    <location>
        <begin position="132"/>
        <end position="134"/>
    </location>
</feature>
<feature type="helix" evidence="11">
    <location>
        <begin position="136"/>
        <end position="139"/>
    </location>
</feature>
<feature type="helix" evidence="11">
    <location>
        <begin position="141"/>
        <end position="144"/>
    </location>
</feature>
<feature type="strand" evidence="16">
    <location>
        <begin position="145"/>
        <end position="147"/>
    </location>
</feature>
<feature type="helix" evidence="11">
    <location>
        <begin position="152"/>
        <end position="166"/>
    </location>
</feature>
<feature type="helix" evidence="11">
    <location>
        <begin position="179"/>
        <end position="181"/>
    </location>
</feature>
<feature type="helix" evidence="11">
    <location>
        <begin position="184"/>
        <end position="187"/>
    </location>
</feature>
<feature type="strand" evidence="11">
    <location>
        <begin position="190"/>
        <end position="193"/>
    </location>
</feature>
<feature type="helix" evidence="11">
    <location>
        <begin position="197"/>
        <end position="208"/>
    </location>
</feature>
<feature type="strand" evidence="11">
    <location>
        <begin position="214"/>
        <end position="222"/>
    </location>
</feature>
<feature type="helix" evidence="11">
    <location>
        <begin position="226"/>
        <end position="229"/>
    </location>
</feature>
<feature type="turn" evidence="11">
    <location>
        <begin position="233"/>
        <end position="235"/>
    </location>
</feature>
<feature type="helix" evidence="11">
    <location>
        <begin position="238"/>
        <end position="249"/>
    </location>
</feature>
<feature type="turn" evidence="11">
    <location>
        <begin position="250"/>
        <end position="252"/>
    </location>
</feature>
<feature type="strand" evidence="11">
    <location>
        <begin position="254"/>
        <end position="258"/>
    </location>
</feature>
<feature type="helix" evidence="11">
    <location>
        <begin position="268"/>
        <end position="273"/>
    </location>
</feature>
<feature type="strand" evidence="11">
    <location>
        <begin position="278"/>
        <end position="281"/>
    </location>
</feature>
<feature type="helix" evidence="11">
    <location>
        <begin position="292"/>
        <end position="294"/>
    </location>
</feature>
<feature type="turn" evidence="11">
    <location>
        <begin position="299"/>
        <end position="302"/>
    </location>
</feature>
<feature type="strand" evidence="11">
    <location>
        <begin position="303"/>
        <end position="305"/>
    </location>
</feature>
<feature type="helix" evidence="11">
    <location>
        <begin position="306"/>
        <end position="317"/>
    </location>
</feature>
<feature type="turn" evidence="15">
    <location>
        <begin position="319"/>
        <end position="321"/>
    </location>
</feature>
<feature type="strand" evidence="12">
    <location>
        <begin position="322"/>
        <end position="324"/>
    </location>
</feature>
<feature type="strand" evidence="11">
    <location>
        <begin position="333"/>
        <end position="338"/>
    </location>
</feature>
<feature type="helix" evidence="11">
    <location>
        <begin position="342"/>
        <end position="353"/>
    </location>
</feature>
<feature type="strand" evidence="11">
    <location>
        <begin position="357"/>
        <end position="362"/>
    </location>
</feature>
<feature type="helix" evidence="11">
    <location>
        <begin position="367"/>
        <end position="369"/>
    </location>
</feature>
<feature type="helix" evidence="11">
    <location>
        <begin position="374"/>
        <end position="382"/>
    </location>
</feature>
<feature type="strand" evidence="11">
    <location>
        <begin position="386"/>
        <end position="388"/>
    </location>
</feature>
<feature type="strand" evidence="11">
    <location>
        <begin position="390"/>
        <end position="399"/>
    </location>
</feature>
<feature type="strand" evidence="11">
    <location>
        <begin position="402"/>
        <end position="413"/>
    </location>
</feature>
<feature type="strand" evidence="15">
    <location>
        <begin position="415"/>
        <end position="417"/>
    </location>
</feature>
<feature type="strand" evidence="11">
    <location>
        <begin position="419"/>
        <end position="430"/>
    </location>
</feature>
<feature type="strand" evidence="11">
    <location>
        <begin position="432"/>
        <end position="436"/>
    </location>
</feature>
<feature type="helix" evidence="11">
    <location>
        <begin position="445"/>
        <end position="450"/>
    </location>
</feature>
<feature type="turn" evidence="11">
    <location>
        <begin position="451"/>
        <end position="453"/>
    </location>
</feature>
<feature type="strand" evidence="11">
    <location>
        <begin position="460"/>
        <end position="462"/>
    </location>
</feature>
<feature type="turn" evidence="11">
    <location>
        <begin position="466"/>
        <end position="468"/>
    </location>
</feature>
<feature type="strand" evidence="11">
    <location>
        <begin position="476"/>
        <end position="478"/>
    </location>
</feature>
<feature type="helix" evidence="11">
    <location>
        <begin position="481"/>
        <end position="483"/>
    </location>
</feature>
<feature type="helix" evidence="11">
    <location>
        <begin position="489"/>
        <end position="510"/>
    </location>
</feature>
<feature type="helix" evidence="11">
    <location>
        <begin position="527"/>
        <end position="530"/>
    </location>
</feature>
<feature type="strand" evidence="11">
    <location>
        <begin position="535"/>
        <end position="537"/>
    </location>
</feature>
<feature type="strand" evidence="11">
    <location>
        <begin position="540"/>
        <end position="548"/>
    </location>
</feature>
<feature type="helix" evidence="11">
    <location>
        <begin position="552"/>
        <end position="554"/>
    </location>
</feature>
<feature type="helix" evidence="11">
    <location>
        <begin position="557"/>
        <end position="566"/>
    </location>
</feature>
<feature type="strand" evidence="11">
    <location>
        <begin position="569"/>
        <end position="572"/>
    </location>
</feature>
<feature type="helix" evidence="11">
    <location>
        <begin position="579"/>
        <end position="581"/>
    </location>
</feature>
<feature type="strand" evidence="11">
    <location>
        <begin position="590"/>
        <end position="592"/>
    </location>
</feature>
<feature type="strand" evidence="13">
    <location>
        <begin position="601"/>
        <end position="603"/>
    </location>
</feature>
<feature type="strand" evidence="11">
    <location>
        <begin position="607"/>
        <end position="609"/>
    </location>
</feature>
<feature type="helix" evidence="11">
    <location>
        <begin position="618"/>
        <end position="631"/>
    </location>
</feature>
<feature type="strand" evidence="11">
    <location>
        <begin position="635"/>
        <end position="641"/>
    </location>
</feature>
<feature type="helix" evidence="11">
    <location>
        <begin position="647"/>
        <end position="659"/>
    </location>
</feature>
<feature type="strand" evidence="11">
    <location>
        <begin position="663"/>
        <end position="668"/>
    </location>
</feature>
<feature type="helix" evidence="14">
    <location>
        <begin position="676"/>
        <end position="678"/>
    </location>
</feature>
<feature type="helix" evidence="11">
    <location>
        <begin position="684"/>
        <end position="686"/>
    </location>
</feature>
<feature type="helix" evidence="11">
    <location>
        <begin position="688"/>
        <end position="701"/>
    </location>
</feature>
<feature type="strand" evidence="11">
    <location>
        <begin position="706"/>
        <end position="710"/>
    </location>
</feature>
<feature type="helix" evidence="11">
    <location>
        <begin position="717"/>
        <end position="727"/>
    </location>
</feature>
<feature type="strand" evidence="11">
    <location>
        <begin position="730"/>
        <end position="734"/>
    </location>
</feature>
<feature type="strand" evidence="11">
    <location>
        <begin position="738"/>
        <end position="740"/>
    </location>
</feature>
<feature type="strand" evidence="11">
    <location>
        <begin position="750"/>
        <end position="752"/>
    </location>
</feature>
<feature type="turn" evidence="11">
    <location>
        <begin position="755"/>
        <end position="758"/>
    </location>
</feature>
<feature type="strand" evidence="11">
    <location>
        <begin position="763"/>
        <end position="767"/>
    </location>
</feature>
<feature type="helix" evidence="11">
    <location>
        <begin position="768"/>
        <end position="770"/>
    </location>
</feature>
<feature type="helix" evidence="11">
    <location>
        <begin position="771"/>
        <end position="784"/>
    </location>
</feature>
<feature type="strand" evidence="11">
    <location>
        <begin position="790"/>
        <end position="795"/>
    </location>
</feature>
<feature type="helix" evidence="11">
    <location>
        <begin position="799"/>
        <end position="807"/>
    </location>
</feature>
<feature type="strand" evidence="11">
    <location>
        <begin position="811"/>
        <end position="816"/>
    </location>
</feature>
<feature type="helix" evidence="11">
    <location>
        <begin position="817"/>
        <end position="820"/>
    </location>
</feature>
<feature type="helix" evidence="11">
    <location>
        <begin position="826"/>
        <end position="840"/>
    </location>
</feature>
<feature type="helix" evidence="11">
    <location>
        <begin position="844"/>
        <end position="846"/>
    </location>
</feature>
<feature type="strand" evidence="10">
    <location>
        <begin position="848"/>
        <end position="850"/>
    </location>
</feature>
<feature type="strand" evidence="15">
    <location>
        <begin position="858"/>
        <end position="860"/>
    </location>
</feature>
<feature type="turn" evidence="11">
    <location>
        <begin position="869"/>
        <end position="873"/>
    </location>
</feature>
<feature type="helix" evidence="11">
    <location>
        <begin position="880"/>
        <end position="899"/>
    </location>
</feature>
<feature type="helix" evidence="11">
    <location>
        <begin position="921"/>
        <end position="924"/>
    </location>
</feature>
<feature type="turn" evidence="11">
    <location>
        <begin position="925"/>
        <end position="928"/>
    </location>
</feature>
<feature type="helix" evidence="11">
    <location>
        <begin position="929"/>
        <end position="931"/>
    </location>
</feature>
<feature type="helix" evidence="11">
    <location>
        <begin position="935"/>
        <end position="937"/>
    </location>
</feature>
<feature type="strand" evidence="11">
    <location>
        <begin position="940"/>
        <end position="942"/>
    </location>
</feature>
<feature type="strand" evidence="11">
    <location>
        <begin position="944"/>
        <end position="948"/>
    </location>
</feature>
<feature type="turn" evidence="11">
    <location>
        <begin position="950"/>
        <end position="952"/>
    </location>
</feature>
<feature type="helix" evidence="11">
    <location>
        <begin position="958"/>
        <end position="966"/>
    </location>
</feature>
<feature type="strand" evidence="11">
    <location>
        <begin position="971"/>
        <end position="973"/>
    </location>
</feature>
<feature type="turn" evidence="11">
    <location>
        <begin position="975"/>
        <end position="977"/>
    </location>
</feature>
<feature type="strand" evidence="11">
    <location>
        <begin position="980"/>
        <end position="982"/>
    </location>
</feature>
<feature type="helix" evidence="11">
    <location>
        <begin position="991"/>
        <end position="995"/>
    </location>
</feature>
<feature type="turn" evidence="11">
    <location>
        <begin position="999"/>
        <end position="1001"/>
    </location>
</feature>
<feature type="strand" evidence="11">
    <location>
        <begin position="1002"/>
        <end position="1006"/>
    </location>
</feature>
<comment type="function">
    <text evidence="3 5 7">Involved in pyrimidine base degradation. Catalyzes the reduction of uracil and thymine.</text>
</comment>
<comment type="catalytic activity">
    <reaction evidence="5 6 7">
        <text>5,6-dihydrouracil + NADP(+) = uracil + NADPH + H(+)</text>
        <dbReference type="Rhea" id="RHEA:18093"/>
        <dbReference type="ChEBI" id="CHEBI:15378"/>
        <dbReference type="ChEBI" id="CHEBI:15901"/>
        <dbReference type="ChEBI" id="CHEBI:17568"/>
        <dbReference type="ChEBI" id="CHEBI:57783"/>
        <dbReference type="ChEBI" id="CHEBI:58349"/>
        <dbReference type="EC" id="1.3.1.2"/>
    </reaction>
    <physiologicalReaction direction="right-to-left" evidence="6">
        <dbReference type="Rhea" id="RHEA:18095"/>
    </physiologicalReaction>
</comment>
<comment type="catalytic activity">
    <reaction evidence="6">
        <text>5,6-dihydrothymine + NADP(+) = thymine + NADPH + H(+)</text>
        <dbReference type="Rhea" id="RHEA:58284"/>
        <dbReference type="ChEBI" id="CHEBI:15378"/>
        <dbReference type="ChEBI" id="CHEBI:17821"/>
        <dbReference type="ChEBI" id="CHEBI:27468"/>
        <dbReference type="ChEBI" id="CHEBI:57783"/>
        <dbReference type="ChEBI" id="CHEBI:58349"/>
        <dbReference type="EC" id="1.3.1.2"/>
    </reaction>
    <physiologicalReaction direction="right-to-left" evidence="9">
        <dbReference type="Rhea" id="RHEA:58286"/>
    </physiologicalReaction>
</comment>
<comment type="cofactor">
    <cofactor>
        <name>FAD</name>
        <dbReference type="ChEBI" id="CHEBI:57692"/>
    </cofactor>
    <text evidence="4">Binds 2 FAD.</text>
</comment>
<comment type="cofactor">
    <cofactor>
        <name>FMN</name>
        <dbReference type="ChEBI" id="CHEBI:58210"/>
    </cofactor>
    <text evidence="4">Binds 2 FMN.</text>
</comment>
<comment type="cofactor">
    <cofactor>
        <name>[4Fe-4S] cluster</name>
        <dbReference type="ChEBI" id="CHEBI:49883"/>
    </cofactor>
    <text evidence="4">Binds 4 [4Fe-4S] clusters. Contains approximately 16 iron atoms per subunit.</text>
</comment>
<comment type="activity regulation">
    <text evidence="4">Inactivated by 5-iodouracil.</text>
</comment>
<comment type="pathway">
    <text evidence="9">Amino-acid biosynthesis; beta-alanine biosynthesis.</text>
</comment>
<comment type="subunit">
    <text evidence="3 4 7">Homodimer.</text>
</comment>
<comment type="subcellular location">
    <subcellularLocation>
        <location>Cytoplasm</location>
    </subcellularLocation>
</comment>
<comment type="similarity">
    <text evidence="8">Belongs to the dihydropyrimidine dehydrogenase family.</text>
</comment>
<gene>
    <name type="primary">DPYD</name>
</gene>
<protein>
    <recommendedName>
        <fullName evidence="8">Dihydropyrimidine dehydrogenase [NADP(+)]</fullName>
        <shortName>DHPDHase</shortName>
        <shortName>DPD</shortName>
        <ecNumber evidence="5 6 7">1.3.1.2</ecNumber>
    </recommendedName>
    <alternativeName>
        <fullName>Dihydrothymine dehydrogenase</fullName>
    </alternativeName>
    <alternativeName>
        <fullName>Dihydrouracil dehydrogenase</fullName>
    </alternativeName>
</protein>
<organism>
    <name type="scientific">Sus scrofa</name>
    <name type="common">Pig</name>
    <dbReference type="NCBI Taxonomy" id="9823"/>
    <lineage>
        <taxon>Eukaryota</taxon>
        <taxon>Metazoa</taxon>
        <taxon>Chordata</taxon>
        <taxon>Craniata</taxon>
        <taxon>Vertebrata</taxon>
        <taxon>Euteleostomi</taxon>
        <taxon>Mammalia</taxon>
        <taxon>Eutheria</taxon>
        <taxon>Laurasiatheria</taxon>
        <taxon>Artiodactyla</taxon>
        <taxon>Suina</taxon>
        <taxon>Suidae</taxon>
        <taxon>Sus</taxon>
    </lineage>
</organism>
<sequence>MAPVLSKDVADIESILALNPRTQSHAALHSTLAKKLDKKHWKRNPDKNCFHCEKLENNFGDIKHTTLGERGALREAMRCLKCADAPCQKSCPTHLDIKSFITSISNKNYYGAAKMIFSDNPLGLTCGMVCPTSDLCVGGCNLYATEEGSINIGGLQQFASEVFKAMNIPQIRNPCLPSQEKMPEAYSAKIALLGAGPASISCASFLARLGYSDITIFEKQEYVGGLSTSEIPQFRLPYDVVNFEIELMKDLGVKIICGKSLSENEITLNTLKEEGYKAAFIGIGLPEPKTDDIFQGLTQDQGFYTSKDFLPLVAKSSKAGMCACHSPLPSIRGAVIVLGAGDTAFDCATSALRCGARRVFLVFRKGFVNIRAVPEEVELAKEEKCEFLPFLSPRKVIVKGGRIVAVQFVRTEQDETGKWNEDEDQIVHLKADVVISAFGSVLRDPKVKEALSPIKFNRWDLPEVDPETMQTSEPWVFAGGDIVGMANTTVESVNDGKQASWYIHKYIQAQYGASVSAKPELPLFYTPVDLVDISVEMAGLKFINPFGLASAAPTTSSSMIRRAFEAGWGFALTKTFSLDKDIVTNVSPRIVRGTTSGPMYGPGQSSFLNIELISEKTAAYWCQSVTELKADFPDNIVIASIMCSYNKNDWMELSRKAEASGADALELNLSCPHGMGERGMGLACGQDPELVRNICRWVRQAVQIPFFAKLTPNVTDIVSIARAAKEGGADGVTATNTVSGLMGLKADGTPWPAVGAGKRTTYGGVSGTAIRPIALRAVTTIARALPGFPILATGGIDSAESGLQFLHSGASVLQVCSAVQNQDFTVIQDYCTGLKALLYLKSIEELQGWDGQSPGTESHQKGKPVPRIAELMGKKLPNFGPYLEQRKKIIAEEKMRLKEQNAAFPPLERKPFIPKKPIPAIKDVIGKALQYLGTFGELSNIEQVVAVIDEEMCINCGKCYMTCNDSGYQAIQFDPETHLPTVTDTCTGCTLCLSVCPIIDCIRMVSRTTPYEPKRGLPLAVNPVC</sequence>